<name>ATG16_EREGS</name>
<comment type="function">
    <text evidence="1">Stabilizes the ATG5-ATG12 conjugate which is necessary for autophagy. The ATG5-ATG12/ATG16 complex is required for efficient promotion of ATG8-conjugation to phosphatidylethanolamine and ATG8 localization to the pre-autophagosomal structure (PAS). Also recruits ATG3 to the PAS. Involved in endoplasmic reticulum-specific autophagic process and is essential for the survival of cells subjected to severe ER stress (By similarity).</text>
</comment>
<comment type="subunit">
    <text evidence="1">Homodimer (By similarity). Part of the ATG5-ATG12/ATG16 complex. Several units of each may be present in this complex (By similarity).</text>
</comment>
<comment type="subcellular location">
    <subcellularLocation>
        <location evidence="2">Preautophagosomal structure membrane</location>
        <topology evidence="2">Peripheral membrane protein</topology>
    </subcellularLocation>
</comment>
<comment type="similarity">
    <text evidence="4">Belongs to the ATG16 family.</text>
</comment>
<sequence>MDLHQLYLDRLRQRDRIEGNFCYLFEAAVVLETAQPPQDSRDLVAKSLREELHAHEQEIHKLKDIVHLRSKDAEKLNDEIISLNIENSLLQDKLTALQAEYDKLIQRWLAKAQSEADAMNQGLA</sequence>
<accession>Q755K3</accession>
<dbReference type="EMBL" id="AE016819">
    <property type="protein sequence ID" value="AAS53188.1"/>
    <property type="molecule type" value="Genomic_DNA"/>
</dbReference>
<dbReference type="RefSeq" id="NP_985364.1">
    <property type="nucleotide sequence ID" value="NM_210718.1"/>
</dbReference>
<dbReference type="PDB" id="6RGO">
    <property type="method" value="X-ray"/>
    <property type="resolution" value="3.70 A"/>
    <property type="chains" value="C/D=70-124"/>
</dbReference>
<dbReference type="PDBsum" id="6RGO"/>
<dbReference type="SMR" id="Q755K3"/>
<dbReference type="STRING" id="284811.Q755K3"/>
<dbReference type="EnsemblFungi" id="AAS53188">
    <property type="protein sequence ID" value="AAS53188"/>
    <property type="gene ID" value="AGOS_AFL186W"/>
</dbReference>
<dbReference type="GeneID" id="4621589"/>
<dbReference type="KEGG" id="ago:AGOS_AFL186W"/>
<dbReference type="eggNOG" id="ENOG502S6TV">
    <property type="taxonomic scope" value="Eukaryota"/>
</dbReference>
<dbReference type="HOGENOM" id="CLU_158825_0_0_1"/>
<dbReference type="InParanoid" id="Q755K3"/>
<dbReference type="OMA" id="QLRNKDY"/>
<dbReference type="OrthoDB" id="8949486at2759"/>
<dbReference type="Proteomes" id="UP000000591">
    <property type="component" value="Chromosome VI"/>
</dbReference>
<dbReference type="GO" id="GO:0034274">
    <property type="term" value="C:Atg12-Atg5-Atg16 complex"/>
    <property type="evidence" value="ECO:0007669"/>
    <property type="project" value="EnsemblFungi"/>
</dbReference>
<dbReference type="GO" id="GO:0061908">
    <property type="term" value="C:phagophore"/>
    <property type="evidence" value="ECO:0007669"/>
    <property type="project" value="EnsemblFungi"/>
</dbReference>
<dbReference type="GO" id="GO:0034045">
    <property type="term" value="C:phagophore assembly site membrane"/>
    <property type="evidence" value="ECO:0007669"/>
    <property type="project" value="UniProtKB-SubCell"/>
</dbReference>
<dbReference type="GO" id="GO:0120095">
    <property type="term" value="C:vacuole-isolation membrane contact site"/>
    <property type="evidence" value="ECO:0007669"/>
    <property type="project" value="EnsemblFungi"/>
</dbReference>
<dbReference type="GO" id="GO:0019776">
    <property type="term" value="F:Atg8-family ligase activity"/>
    <property type="evidence" value="ECO:0007669"/>
    <property type="project" value="EnsemblFungi"/>
</dbReference>
<dbReference type="GO" id="GO:0042802">
    <property type="term" value="F:identical protein binding"/>
    <property type="evidence" value="ECO:0007669"/>
    <property type="project" value="EnsemblFungi"/>
</dbReference>
<dbReference type="GO" id="GO:0030674">
    <property type="term" value="F:protein-macromolecule adaptor activity"/>
    <property type="evidence" value="ECO:0007669"/>
    <property type="project" value="EnsemblFungi"/>
</dbReference>
<dbReference type="GO" id="GO:1905037">
    <property type="term" value="P:autophagosome organization"/>
    <property type="evidence" value="ECO:0007669"/>
    <property type="project" value="EnsemblFungi"/>
</dbReference>
<dbReference type="GO" id="GO:0000422">
    <property type="term" value="P:autophagy of mitochondrion"/>
    <property type="evidence" value="ECO:0007669"/>
    <property type="project" value="EnsemblFungi"/>
</dbReference>
<dbReference type="GO" id="GO:0032258">
    <property type="term" value="P:cytoplasm to vacuole targeting by the Cvt pathway"/>
    <property type="evidence" value="ECO:0007669"/>
    <property type="project" value="EnsemblFungi"/>
</dbReference>
<dbReference type="GO" id="GO:0034727">
    <property type="term" value="P:piecemeal microautophagy of the nucleus"/>
    <property type="evidence" value="ECO:0007669"/>
    <property type="project" value="EnsemblFungi"/>
</dbReference>
<dbReference type="CDD" id="cd22887">
    <property type="entry name" value="Atg16_CCD"/>
    <property type="match status" value="1"/>
</dbReference>
<dbReference type="Gene3D" id="1.20.5.170">
    <property type="match status" value="1"/>
</dbReference>
<dbReference type="InterPro" id="IPR013923">
    <property type="entry name" value="Autophagy-rel_prot_16_dom"/>
</dbReference>
<dbReference type="Pfam" id="PF08614">
    <property type="entry name" value="ATG16"/>
    <property type="match status" value="1"/>
</dbReference>
<organism>
    <name type="scientific">Eremothecium gossypii (strain ATCC 10895 / CBS 109.51 / FGSC 9923 / NRRL Y-1056)</name>
    <name type="common">Yeast</name>
    <name type="synonym">Ashbya gossypii</name>
    <dbReference type="NCBI Taxonomy" id="284811"/>
    <lineage>
        <taxon>Eukaryota</taxon>
        <taxon>Fungi</taxon>
        <taxon>Dikarya</taxon>
        <taxon>Ascomycota</taxon>
        <taxon>Saccharomycotina</taxon>
        <taxon>Saccharomycetes</taxon>
        <taxon>Saccharomycetales</taxon>
        <taxon>Saccharomycetaceae</taxon>
        <taxon>Eremothecium</taxon>
    </lineage>
</organism>
<keyword id="KW-0002">3D-structure</keyword>
<keyword id="KW-0072">Autophagy</keyword>
<keyword id="KW-0175">Coiled coil</keyword>
<keyword id="KW-0472">Membrane</keyword>
<keyword id="KW-0653">Protein transport</keyword>
<keyword id="KW-1185">Reference proteome</keyword>
<keyword id="KW-0813">Transport</keyword>
<protein>
    <recommendedName>
        <fullName>Autophagy protein 16</fullName>
    </recommendedName>
</protein>
<feature type="chain" id="PRO_0000218587" description="Autophagy protein 16">
    <location>
        <begin position="1"/>
        <end position="124"/>
    </location>
</feature>
<feature type="coiled-coil region" evidence="3">
    <location>
        <begin position="42"/>
        <end position="107"/>
    </location>
</feature>
<proteinExistence type="evidence at protein level"/>
<gene>
    <name type="primary">ATG16</name>
    <name type="ordered locus">AFL186W</name>
</gene>
<evidence type="ECO:0000250" key="1"/>
<evidence type="ECO:0000250" key="2">
    <source>
        <dbReference type="UniProtKB" id="Q03818"/>
    </source>
</evidence>
<evidence type="ECO:0000255" key="3"/>
<evidence type="ECO:0000305" key="4"/>
<reference key="1">
    <citation type="journal article" date="2004" name="Science">
        <title>The Ashbya gossypii genome as a tool for mapping the ancient Saccharomyces cerevisiae genome.</title>
        <authorList>
            <person name="Dietrich F.S."/>
            <person name="Voegeli S."/>
            <person name="Brachat S."/>
            <person name="Lerch A."/>
            <person name="Gates K."/>
            <person name="Steiner S."/>
            <person name="Mohr C."/>
            <person name="Poehlmann R."/>
            <person name="Luedi P."/>
            <person name="Choi S."/>
            <person name="Wing R.A."/>
            <person name="Flavier A."/>
            <person name="Gaffney T.D."/>
            <person name="Philippsen P."/>
        </authorList>
    </citation>
    <scope>NUCLEOTIDE SEQUENCE [LARGE SCALE GENOMIC DNA]</scope>
    <source>
        <strain>ATCC 10895 / CBS 109.51 / FGSC 9923 / NRRL Y-1056</strain>
    </source>
</reference>
<reference key="2">
    <citation type="journal article" date="2013" name="G3 (Bethesda)">
        <title>Genomes of Ashbya fungi isolated from insects reveal four mating-type loci, numerous translocations, lack of transposons, and distinct gene duplications.</title>
        <authorList>
            <person name="Dietrich F.S."/>
            <person name="Voegeli S."/>
            <person name="Kuo S."/>
            <person name="Philippsen P."/>
        </authorList>
    </citation>
    <scope>GENOME REANNOTATION</scope>
    <source>
        <strain>ATCC 10895 / CBS 109.51 / FGSC 9923 / NRRL Y-1056</strain>
    </source>
</reference>